<comment type="function">
    <text evidence="1">Catalyzes the interconversion between ADP-D-glycero-beta-D-manno-heptose and ADP-L-glycero-beta-D-manno-heptose via an epimerization at carbon 6 of the heptose.</text>
</comment>
<comment type="catalytic activity">
    <reaction evidence="1">
        <text>ADP-D-glycero-beta-D-manno-heptose = ADP-L-glycero-beta-D-manno-heptose</text>
        <dbReference type="Rhea" id="RHEA:17577"/>
        <dbReference type="ChEBI" id="CHEBI:59967"/>
        <dbReference type="ChEBI" id="CHEBI:61506"/>
        <dbReference type="EC" id="5.1.3.20"/>
    </reaction>
</comment>
<comment type="cofactor">
    <cofactor evidence="1">
        <name>NADP(+)</name>
        <dbReference type="ChEBI" id="CHEBI:58349"/>
    </cofactor>
    <text evidence="1">Binds 1 NADP(+) per subunit.</text>
</comment>
<comment type="pathway">
    <text evidence="1">Nucleotide-sugar biosynthesis; ADP-L-glycero-beta-D-manno-heptose biosynthesis; ADP-L-glycero-beta-D-manno-heptose from D-glycero-beta-D-manno-heptose 7-phosphate: step 4/4.</text>
</comment>
<comment type="pathway">
    <text>Bacterial outer membrane biogenesis; LOS core biosynthesis.</text>
</comment>
<comment type="subunit">
    <text evidence="1">Homopentamer.</text>
</comment>
<comment type="domain">
    <text evidence="1">Contains a large N-terminal NADP-binding domain, and a smaller C-terminal substrate-binding domain.</text>
</comment>
<comment type="similarity">
    <text evidence="1">Belongs to the NAD(P)-dependent epimerase/dehydratase family. HldD subfamily.</text>
</comment>
<feature type="chain" id="PRO_0000205802" description="ADP-L-glycero-D-manno-heptose-6-epimerase">
    <location>
        <begin position="1"/>
        <end position="334"/>
    </location>
</feature>
<feature type="active site" description="Proton acceptor" evidence="1">
    <location>
        <position position="141"/>
    </location>
</feature>
<feature type="active site" description="Proton acceptor" evidence="1">
    <location>
        <position position="180"/>
    </location>
</feature>
<feature type="binding site" evidence="1">
    <location>
        <begin position="11"/>
        <end position="12"/>
    </location>
    <ligand>
        <name>NADP(+)</name>
        <dbReference type="ChEBI" id="CHEBI:58349"/>
    </ligand>
</feature>
<feature type="binding site" evidence="1">
    <location>
        <begin position="32"/>
        <end position="33"/>
    </location>
    <ligand>
        <name>NADP(+)</name>
        <dbReference type="ChEBI" id="CHEBI:58349"/>
    </ligand>
</feature>
<feature type="binding site" evidence="1">
    <location>
        <position position="39"/>
    </location>
    <ligand>
        <name>NADP(+)</name>
        <dbReference type="ChEBI" id="CHEBI:58349"/>
    </ligand>
</feature>
<feature type="binding site" evidence="1">
    <location>
        <position position="54"/>
    </location>
    <ligand>
        <name>NADP(+)</name>
        <dbReference type="ChEBI" id="CHEBI:58349"/>
    </ligand>
</feature>
<feature type="binding site" evidence="1">
    <location>
        <begin position="77"/>
        <end position="81"/>
    </location>
    <ligand>
        <name>NADP(+)</name>
        <dbReference type="ChEBI" id="CHEBI:58349"/>
    </ligand>
</feature>
<feature type="binding site" evidence="1">
    <location>
        <position position="94"/>
    </location>
    <ligand>
        <name>NADP(+)</name>
        <dbReference type="ChEBI" id="CHEBI:58349"/>
    </ligand>
</feature>
<feature type="binding site" evidence="1">
    <location>
        <position position="145"/>
    </location>
    <ligand>
        <name>NADP(+)</name>
        <dbReference type="ChEBI" id="CHEBI:58349"/>
    </ligand>
</feature>
<feature type="binding site" evidence="1">
    <location>
        <position position="171"/>
    </location>
    <ligand>
        <name>substrate</name>
    </ligand>
</feature>
<feature type="binding site" evidence="1">
    <location>
        <position position="172"/>
    </location>
    <ligand>
        <name>NADP(+)</name>
        <dbReference type="ChEBI" id="CHEBI:58349"/>
    </ligand>
</feature>
<feature type="binding site" evidence="1">
    <location>
        <position position="180"/>
    </location>
    <ligand>
        <name>NADP(+)</name>
        <dbReference type="ChEBI" id="CHEBI:58349"/>
    </ligand>
</feature>
<feature type="binding site" evidence="1">
    <location>
        <position position="182"/>
    </location>
    <ligand>
        <name>substrate</name>
    </ligand>
</feature>
<feature type="binding site" evidence="1">
    <location>
        <position position="189"/>
    </location>
    <ligand>
        <name>substrate</name>
    </ligand>
</feature>
<feature type="binding site" evidence="1">
    <location>
        <begin position="203"/>
        <end position="206"/>
    </location>
    <ligand>
        <name>substrate</name>
    </ligand>
</feature>
<feature type="binding site" evidence="1">
    <location>
        <position position="216"/>
    </location>
    <ligand>
        <name>substrate</name>
    </ligand>
</feature>
<feature type="binding site" evidence="1">
    <location>
        <position position="295"/>
    </location>
    <ligand>
        <name>substrate</name>
    </ligand>
</feature>
<sequence length="334" mass="38436">MTIIVTGAAGFIGSNIVKALNQRGITDIVAVDNLSKGEKFKNLAECEIAHYLDKHEFIRQVREHILPYQNIEAVFHQGACSDTMNHDGLYMMDNNYQYTLDLLDWCQDERIPFLYASSAAVYGKGEIFREERELEKPLNVYGYSKFLFDQVLRRRMKEGLTAQVVGFRYFNVYGQHEQHKGRMASVAFHHFHQYREHGYVNLFGSNDGYGNGEQTRDFVSVEDVAKVNLYFFDHPELSGIYNLGTGRSQQFNELAAATVNACRAAEGKPEMSLKELVEEELIRYIPFPDALKGKYQSFTQADITKLREAGYKEEFFDVKSGVDRYVKWMLENLA</sequence>
<dbReference type="EC" id="5.1.3.20" evidence="1"/>
<dbReference type="EMBL" id="AE002098">
    <property type="protein sequence ID" value="AAF41240.1"/>
    <property type="molecule type" value="Genomic_DNA"/>
</dbReference>
<dbReference type="PIR" id="E81152">
    <property type="entry name" value="E81152"/>
</dbReference>
<dbReference type="RefSeq" id="NP_273870.1">
    <property type="nucleotide sequence ID" value="NC_003112.2"/>
</dbReference>
<dbReference type="SMR" id="Q9K002"/>
<dbReference type="FunCoup" id="Q9K002">
    <property type="interactions" value="251"/>
</dbReference>
<dbReference type="STRING" id="122586.NMB0828"/>
<dbReference type="PaxDb" id="122586-NMB0828"/>
<dbReference type="KEGG" id="nme:NMB0828"/>
<dbReference type="PATRIC" id="fig|122586.8.peg.1040"/>
<dbReference type="HOGENOM" id="CLU_007383_1_3_4"/>
<dbReference type="InParanoid" id="Q9K002"/>
<dbReference type="OrthoDB" id="9803010at2"/>
<dbReference type="UniPathway" id="UPA00356">
    <property type="reaction ID" value="UER00440"/>
</dbReference>
<dbReference type="UniPathway" id="UPA00976"/>
<dbReference type="Proteomes" id="UP000000425">
    <property type="component" value="Chromosome"/>
</dbReference>
<dbReference type="GO" id="GO:0008712">
    <property type="term" value="F:ADP-glyceromanno-heptose 6-epimerase activity"/>
    <property type="evidence" value="ECO:0007669"/>
    <property type="project" value="UniProtKB-UniRule"/>
</dbReference>
<dbReference type="GO" id="GO:0050661">
    <property type="term" value="F:NADP binding"/>
    <property type="evidence" value="ECO:0007669"/>
    <property type="project" value="InterPro"/>
</dbReference>
<dbReference type="GO" id="GO:0097171">
    <property type="term" value="P:ADP-L-glycero-beta-D-manno-heptose biosynthetic process"/>
    <property type="evidence" value="ECO:0007669"/>
    <property type="project" value="UniProtKB-UniPathway"/>
</dbReference>
<dbReference type="GO" id="GO:0005975">
    <property type="term" value="P:carbohydrate metabolic process"/>
    <property type="evidence" value="ECO:0007669"/>
    <property type="project" value="UniProtKB-UniRule"/>
</dbReference>
<dbReference type="CDD" id="cd05248">
    <property type="entry name" value="ADP_GME_SDR_e"/>
    <property type="match status" value="1"/>
</dbReference>
<dbReference type="Gene3D" id="3.40.50.720">
    <property type="entry name" value="NAD(P)-binding Rossmann-like Domain"/>
    <property type="match status" value="1"/>
</dbReference>
<dbReference type="Gene3D" id="3.90.25.10">
    <property type="entry name" value="UDP-galactose 4-epimerase, domain 1"/>
    <property type="match status" value="1"/>
</dbReference>
<dbReference type="HAMAP" id="MF_01601">
    <property type="entry name" value="Heptose_epimerase"/>
    <property type="match status" value="1"/>
</dbReference>
<dbReference type="InterPro" id="IPR001509">
    <property type="entry name" value="Epimerase_deHydtase"/>
</dbReference>
<dbReference type="InterPro" id="IPR011912">
    <property type="entry name" value="Heptose_epim"/>
</dbReference>
<dbReference type="InterPro" id="IPR036291">
    <property type="entry name" value="NAD(P)-bd_dom_sf"/>
</dbReference>
<dbReference type="NCBIfam" id="TIGR02197">
    <property type="entry name" value="heptose_epim"/>
    <property type="match status" value="1"/>
</dbReference>
<dbReference type="PANTHER" id="PTHR43103:SF3">
    <property type="entry name" value="ADP-L-GLYCERO-D-MANNO-HEPTOSE-6-EPIMERASE"/>
    <property type="match status" value="1"/>
</dbReference>
<dbReference type="PANTHER" id="PTHR43103">
    <property type="entry name" value="NUCLEOSIDE-DIPHOSPHATE-SUGAR EPIMERASE"/>
    <property type="match status" value="1"/>
</dbReference>
<dbReference type="Pfam" id="PF01370">
    <property type="entry name" value="Epimerase"/>
    <property type="match status" value="1"/>
</dbReference>
<dbReference type="SUPFAM" id="SSF51735">
    <property type="entry name" value="NAD(P)-binding Rossmann-fold domains"/>
    <property type="match status" value="1"/>
</dbReference>
<accession>Q9K002</accession>
<keyword id="KW-0119">Carbohydrate metabolism</keyword>
<keyword id="KW-0413">Isomerase</keyword>
<keyword id="KW-0521">NADP</keyword>
<keyword id="KW-1185">Reference proteome</keyword>
<organism>
    <name type="scientific">Neisseria meningitidis serogroup B (strain ATCC BAA-335 / MC58)</name>
    <dbReference type="NCBI Taxonomy" id="122586"/>
    <lineage>
        <taxon>Bacteria</taxon>
        <taxon>Pseudomonadati</taxon>
        <taxon>Pseudomonadota</taxon>
        <taxon>Betaproteobacteria</taxon>
        <taxon>Neisseriales</taxon>
        <taxon>Neisseriaceae</taxon>
        <taxon>Neisseria</taxon>
    </lineage>
</organism>
<gene>
    <name evidence="1" type="primary">hldD</name>
    <name type="ordered locus">NMB0828</name>
</gene>
<proteinExistence type="inferred from homology"/>
<reference key="1">
    <citation type="journal article" date="2000" name="Science">
        <title>Complete genome sequence of Neisseria meningitidis serogroup B strain MC58.</title>
        <authorList>
            <person name="Tettelin H."/>
            <person name="Saunders N.J."/>
            <person name="Heidelberg J.F."/>
            <person name="Jeffries A.C."/>
            <person name="Nelson K.E."/>
            <person name="Eisen J.A."/>
            <person name="Ketchum K.A."/>
            <person name="Hood D.W."/>
            <person name="Peden J.F."/>
            <person name="Dodson R.J."/>
            <person name="Nelson W.C."/>
            <person name="Gwinn M.L."/>
            <person name="DeBoy R.T."/>
            <person name="Peterson J.D."/>
            <person name="Hickey E.K."/>
            <person name="Haft D.H."/>
            <person name="Salzberg S.L."/>
            <person name="White O."/>
            <person name="Fleischmann R.D."/>
            <person name="Dougherty B.A."/>
            <person name="Mason T.M."/>
            <person name="Ciecko A."/>
            <person name="Parksey D.S."/>
            <person name="Blair E."/>
            <person name="Cittone H."/>
            <person name="Clark E.B."/>
            <person name="Cotton M.D."/>
            <person name="Utterback T.R."/>
            <person name="Khouri H.M."/>
            <person name="Qin H."/>
            <person name="Vamathevan J.J."/>
            <person name="Gill J."/>
            <person name="Scarlato V."/>
            <person name="Masignani V."/>
            <person name="Pizza M."/>
            <person name="Grandi G."/>
            <person name="Sun L."/>
            <person name="Smith H.O."/>
            <person name="Fraser C.M."/>
            <person name="Moxon E.R."/>
            <person name="Rappuoli R."/>
            <person name="Venter J.C."/>
        </authorList>
    </citation>
    <scope>NUCLEOTIDE SEQUENCE [LARGE SCALE GENOMIC DNA]</scope>
    <source>
        <strain>ATCC BAA-335 / MC58</strain>
    </source>
</reference>
<name>HLDD_NEIMB</name>
<protein>
    <recommendedName>
        <fullName evidence="1">ADP-L-glycero-D-manno-heptose-6-epimerase</fullName>
        <ecNumber evidence="1">5.1.3.20</ecNumber>
    </recommendedName>
    <alternativeName>
        <fullName evidence="1">ADP-L-glycero-beta-D-manno-heptose-6-epimerase</fullName>
        <shortName evidence="1">ADP-glyceromanno-heptose 6-epimerase</shortName>
        <shortName evidence="1">ADP-hep 6-epimerase</shortName>
        <shortName evidence="1">AGME</shortName>
    </alternativeName>
</protein>
<evidence type="ECO:0000255" key="1">
    <source>
        <dbReference type="HAMAP-Rule" id="MF_01601"/>
    </source>
</evidence>